<proteinExistence type="evidence at transcript level"/>
<name>GT20_ARATH</name>
<sequence>MVSKRKSRTSKTIEDSCIHLCSVFFRFLYYTLPALFLFFFLLYLCLSFTTGISYNNFHMCIFSRKFNDPYCNTAGSKPGFQIISEENVTFAGEIAGDRVSKDHNKILNSVPVQEHKTKNKVDLNSLIELKAEEEYSKYIKPTSEDEGYALRAAIKYLYLQRSWLSPGDENLNKPRSCEGKGVYVYDLPSKFNSDLLVGCNDILPGVNLCSYFKNEGFGEAIKNLGKGWFATHMYSLEPILHSRVLKHPCRVYNETQAKLFFVPYYGGYDVLRWHYRNVSEDVKDRLGIEVLKWLNSKESWRRNAGKDHVFVLGKITWDFRRDKDPWGSRFLELQEMQNPTKLLIERQPWQVNDIAIPHPTYFHPRTDDDITRWQIKIMSKLRRNLVSFAGGARPDNPNNIRSTLIEQCISSNQCRFLNCTNESCTNPKNVLDLFQDSEFCLQPPGDSATRRSVFDSLISGCIPVIFTPYTAYYQYAWHLPEDHRKYSVYISEQDVKEKRVNVVEILKAKTLKEKKDMKSYIVQQLLPGLVYGDSNAKFEKFRDAFDITFDCLLKKINRSVV</sequence>
<reference key="1">
    <citation type="journal article" date="2014" name="Plant J.">
        <title>The plant glycosyltransferase clone collection for functional genomics.</title>
        <authorList>
            <person name="Lao J."/>
            <person name="Oikawa A."/>
            <person name="Bromley J.R."/>
            <person name="McInerney P."/>
            <person name="Suttangkakul A."/>
            <person name="Smith-Moritz A.M."/>
            <person name="Plahar H."/>
            <person name="Chiu T.-Y."/>
            <person name="Gonzalez Fernandez-Nino S.M.G."/>
            <person name="Ebert B."/>
            <person name="Yang F."/>
            <person name="Christiansen K.M."/>
            <person name="Hansen S.F."/>
            <person name="Stonebloom S."/>
            <person name="Adams P.D."/>
            <person name="Ronald P.C."/>
            <person name="Hillson N.J."/>
            <person name="Hadi M.Z."/>
            <person name="Vega-Sanchez M.E."/>
            <person name="Loque D."/>
            <person name="Scheller H.V."/>
            <person name="Heazlewood J.L."/>
        </authorList>
    </citation>
    <scope>NUCLEOTIDE SEQUENCE [MRNA]</scope>
    <source>
        <strain>cv. Columbia</strain>
    </source>
</reference>
<reference key="2">
    <citation type="journal article" date="2000" name="DNA Res.">
        <title>Structural analysis of Arabidopsis thaliana chromosome 5. X. Sequence features of the regions of 3,076,755 bp covered by sixty P1 and TAC clones.</title>
        <authorList>
            <person name="Sato S."/>
            <person name="Nakamura Y."/>
            <person name="Kaneko T."/>
            <person name="Katoh T."/>
            <person name="Asamizu E."/>
            <person name="Kotani H."/>
            <person name="Tabata S."/>
        </authorList>
    </citation>
    <scope>NUCLEOTIDE SEQUENCE [LARGE SCALE GENOMIC DNA]</scope>
    <source>
        <strain>cv. Columbia</strain>
    </source>
</reference>
<reference key="3">
    <citation type="journal article" date="2017" name="Plant J.">
        <title>Araport11: a complete reannotation of the Arabidopsis thaliana reference genome.</title>
        <authorList>
            <person name="Cheng C.Y."/>
            <person name="Krishnakumar V."/>
            <person name="Chan A.P."/>
            <person name="Thibaud-Nissen F."/>
            <person name="Schobel S."/>
            <person name="Town C.D."/>
        </authorList>
    </citation>
    <scope>GENOME REANNOTATION</scope>
    <source>
        <strain>cv. Columbia</strain>
    </source>
</reference>
<reference key="4">
    <citation type="journal article" date="2004" name="Plant Physiol.">
        <title>Molecular analysis of 10 coding regions from Arabidopsis that are homologous to the MUR3 xyloglucan galactosyltransferase.</title>
        <authorList>
            <person name="Li X."/>
            <person name="Cordero I."/>
            <person name="Caplan J."/>
            <person name="Moelhoej M."/>
            <person name="Reiter W.D."/>
        </authorList>
    </citation>
    <scope>TISSUE SPECIFICITY</scope>
</reference>
<accession>Q9FHD8</accession>
<gene>
    <name evidence="6" type="primary">GT20</name>
    <name evidence="8" type="ordered locus">At5g41250</name>
    <name evidence="9" type="ORF">K1O13.4</name>
</gene>
<feature type="chain" id="PRO_0000436001" description="Probable xyloglucan galactosyltransferase GT20">
    <location>
        <begin position="1"/>
        <end position="561"/>
    </location>
</feature>
<feature type="topological domain" description="Cytoplasmic" evidence="7">
    <location>
        <begin position="1"/>
        <end position="31"/>
    </location>
</feature>
<feature type="transmembrane region" description="Helical; Signal-anchor for type II membrane protein" evidence="3">
    <location>
        <begin position="32"/>
        <end position="52"/>
    </location>
</feature>
<feature type="topological domain" description="Lumenal" evidence="7">
    <location>
        <begin position="53"/>
        <end position="561"/>
    </location>
</feature>
<feature type="glycosylation site" description="N-linked (GlcNAc...) asparagine" evidence="4">
    <location>
        <position position="87"/>
    </location>
</feature>
<feature type="glycosylation site" description="N-linked (GlcNAc...) asparagine" evidence="4">
    <location>
        <position position="253"/>
    </location>
</feature>
<feature type="glycosylation site" description="N-linked (GlcNAc...) asparagine" evidence="4">
    <location>
        <position position="277"/>
    </location>
</feature>
<feature type="glycosylation site" description="N-linked (GlcNAc...) asparagine" evidence="4">
    <location>
        <position position="418"/>
    </location>
</feature>
<feature type="glycosylation site" description="N-linked (GlcNAc...) asparagine" evidence="4">
    <location>
        <position position="421"/>
    </location>
</feature>
<feature type="glycosylation site" description="N-linked (GlcNAc...) asparagine" evidence="4">
    <location>
        <position position="557"/>
    </location>
</feature>
<keyword id="KW-0325">Glycoprotein</keyword>
<keyword id="KW-0328">Glycosyltransferase</keyword>
<keyword id="KW-0333">Golgi apparatus</keyword>
<keyword id="KW-0472">Membrane</keyword>
<keyword id="KW-1185">Reference proteome</keyword>
<keyword id="KW-0735">Signal-anchor</keyword>
<keyword id="KW-0808">Transferase</keyword>
<keyword id="KW-0812">Transmembrane</keyword>
<keyword id="KW-1133">Transmembrane helix</keyword>
<organism>
    <name type="scientific">Arabidopsis thaliana</name>
    <name type="common">Mouse-ear cress</name>
    <dbReference type="NCBI Taxonomy" id="3702"/>
    <lineage>
        <taxon>Eukaryota</taxon>
        <taxon>Viridiplantae</taxon>
        <taxon>Streptophyta</taxon>
        <taxon>Embryophyta</taxon>
        <taxon>Tracheophyta</taxon>
        <taxon>Spermatophyta</taxon>
        <taxon>Magnoliopsida</taxon>
        <taxon>eudicotyledons</taxon>
        <taxon>Gunneridae</taxon>
        <taxon>Pentapetalae</taxon>
        <taxon>rosids</taxon>
        <taxon>malvids</taxon>
        <taxon>Brassicales</taxon>
        <taxon>Brassicaceae</taxon>
        <taxon>Camelineae</taxon>
        <taxon>Arabidopsis</taxon>
    </lineage>
</organism>
<comment type="function">
    <text evidence="1">Functions in xyloglucan synthesis by adding side chains to the xylosylated glucan backbone. Involved in the galactosylation of hemicellulose xyloglucan.</text>
</comment>
<comment type="subcellular location">
    <subcellularLocation>
        <location evidence="2">Golgi apparatus membrane</location>
        <topology evidence="2">Single-pass type II membrane protein</topology>
    </subcellularLocation>
</comment>
<comment type="tissue specificity">
    <text evidence="5">Expressed in hydathodes.</text>
</comment>
<comment type="similarity">
    <text evidence="7">Belongs to the glycosyltransferase 47 family.</text>
</comment>
<dbReference type="EC" id="2.4.1.-" evidence="7"/>
<dbReference type="EMBL" id="KJ138652">
    <property type="protein sequence ID" value="AHL38592.1"/>
    <property type="molecule type" value="mRNA"/>
</dbReference>
<dbReference type="EMBL" id="AB019225">
    <property type="protein sequence ID" value="BAB11101.1"/>
    <property type="molecule type" value="Genomic_DNA"/>
</dbReference>
<dbReference type="EMBL" id="CP002688">
    <property type="protein sequence ID" value="AED94657.1"/>
    <property type="molecule type" value="Genomic_DNA"/>
</dbReference>
<dbReference type="RefSeq" id="NP_198941.1">
    <property type="nucleotide sequence ID" value="NM_123490.1"/>
</dbReference>
<dbReference type="STRING" id="3702.Q9FHD8"/>
<dbReference type="CAZy" id="GT47">
    <property type="family name" value="Glycosyltransferase Family 47"/>
</dbReference>
<dbReference type="GlyCosmos" id="Q9FHD8">
    <property type="glycosylation" value="6 sites, No reported glycans"/>
</dbReference>
<dbReference type="GlyGen" id="Q9FHD8">
    <property type="glycosylation" value="6 sites"/>
</dbReference>
<dbReference type="PaxDb" id="3702-AT5G41250.1"/>
<dbReference type="EnsemblPlants" id="AT5G41250.1">
    <property type="protein sequence ID" value="AT5G41250.1"/>
    <property type="gene ID" value="AT5G41250"/>
</dbReference>
<dbReference type="GeneID" id="834126"/>
<dbReference type="Gramene" id="AT5G41250.1">
    <property type="protein sequence ID" value="AT5G41250.1"/>
    <property type="gene ID" value="AT5G41250"/>
</dbReference>
<dbReference type="KEGG" id="ath:AT5G41250"/>
<dbReference type="Araport" id="AT5G41250"/>
<dbReference type="TAIR" id="AT5G41250"/>
<dbReference type="eggNOG" id="KOG1021">
    <property type="taxonomic scope" value="Eukaryota"/>
</dbReference>
<dbReference type="HOGENOM" id="CLU_012659_1_0_1"/>
<dbReference type="InParanoid" id="Q9FHD8"/>
<dbReference type="OMA" id="QDMQNPT"/>
<dbReference type="PhylomeDB" id="Q9FHD8"/>
<dbReference type="PRO" id="PR:Q9FHD8"/>
<dbReference type="Proteomes" id="UP000006548">
    <property type="component" value="Chromosome 5"/>
</dbReference>
<dbReference type="ExpressionAtlas" id="Q9FHD8">
    <property type="expression patterns" value="baseline and differential"/>
</dbReference>
<dbReference type="GO" id="GO:0000139">
    <property type="term" value="C:Golgi membrane"/>
    <property type="evidence" value="ECO:0007669"/>
    <property type="project" value="UniProtKB-SubCell"/>
</dbReference>
<dbReference type="GO" id="GO:0016757">
    <property type="term" value="F:glycosyltransferase activity"/>
    <property type="evidence" value="ECO:0007669"/>
    <property type="project" value="UniProtKB-KW"/>
</dbReference>
<dbReference type="GO" id="GO:0006486">
    <property type="term" value="P:protein glycosylation"/>
    <property type="evidence" value="ECO:0007669"/>
    <property type="project" value="InterPro"/>
</dbReference>
<dbReference type="InterPro" id="IPR004263">
    <property type="entry name" value="Exostosin"/>
</dbReference>
<dbReference type="InterPro" id="IPR040911">
    <property type="entry name" value="Exostosin_GT47"/>
</dbReference>
<dbReference type="PANTHER" id="PTHR11062">
    <property type="entry name" value="EXOSTOSIN HEPARAN SULFATE GLYCOSYLTRANSFERASE -RELATED"/>
    <property type="match status" value="1"/>
</dbReference>
<dbReference type="PANTHER" id="PTHR11062:SF335">
    <property type="entry name" value="XYLOGLUCAN GALACTOSYLTRANSFERASE GT20-RELATED"/>
    <property type="match status" value="1"/>
</dbReference>
<dbReference type="Pfam" id="PF03016">
    <property type="entry name" value="Exostosin_GT47"/>
    <property type="match status" value="1"/>
</dbReference>
<protein>
    <recommendedName>
        <fullName evidence="7">Probable xyloglucan galactosyltransferase GT20</fullName>
        <ecNumber evidence="7">2.4.1.-</ecNumber>
    </recommendedName>
    <alternativeName>
        <fullName evidence="6">Glycosyltransferase 20</fullName>
        <shortName evidence="6">AtGT20</shortName>
    </alternativeName>
</protein>
<evidence type="ECO:0000250" key="1">
    <source>
        <dbReference type="UniProtKB" id="F4K6F1"/>
    </source>
</evidence>
<evidence type="ECO:0000250" key="2">
    <source>
        <dbReference type="UniProtKB" id="Q7XJ98"/>
    </source>
</evidence>
<evidence type="ECO:0000255" key="3"/>
<evidence type="ECO:0000255" key="4">
    <source>
        <dbReference type="PROSITE-ProRule" id="PRU00498"/>
    </source>
</evidence>
<evidence type="ECO:0000269" key="5">
    <source>
    </source>
</evidence>
<evidence type="ECO:0000303" key="6">
    <source>
    </source>
</evidence>
<evidence type="ECO:0000305" key="7"/>
<evidence type="ECO:0000312" key="8">
    <source>
        <dbReference type="Araport" id="AT5G41250"/>
    </source>
</evidence>
<evidence type="ECO:0000312" key="9">
    <source>
        <dbReference type="EMBL" id="BAB11101.1"/>
    </source>
</evidence>